<sequence length="338" mass="38384">MVLTLLKAKPERKLAKQICKVVLDHFEKQYSKELGDAWNTVRDILTSPSCWQYAVLLNRFNYPFELEKDLHLKGYHSLLQGSLPYYPKSMKCYLSRTPHRMPSERHQTGNLKKYYLLNAASLLPVLALELRDGEKVLDLCAAPGGKSLALLQCAYPGYLHCNEYDSLRLRWLRQTLESFIPQPLVNVIKVSELDGREMGDAQPETFDKVLVDAPCSNDRSWLFSSDSQKAACRISQRRNLPLLQMELLRSAIKALRPGGLLVYSTCTLSKAENQDVISEVLNSYSNIMPVDIKEMARTCSRDFTFAPTGQECGLLVIPDKGKAWGPMYVAKLKKSWTT</sequence>
<name>NSUN3_BOVIN</name>
<proteinExistence type="evidence at transcript level"/>
<keyword id="KW-0489">Methyltransferase</keyword>
<keyword id="KW-0496">Mitochondrion</keyword>
<keyword id="KW-1185">Reference proteome</keyword>
<keyword id="KW-0694">RNA-binding</keyword>
<keyword id="KW-0949">S-adenosyl-L-methionine</keyword>
<keyword id="KW-0808">Transferase</keyword>
<keyword id="KW-0820">tRNA-binding</keyword>
<dbReference type="EC" id="2.1.1.-" evidence="1"/>
<dbReference type="EMBL" id="BC120181">
    <property type="protein sequence ID" value="AAI20182.1"/>
    <property type="molecule type" value="mRNA"/>
</dbReference>
<dbReference type="RefSeq" id="NP_001069469.1">
    <property type="nucleotide sequence ID" value="NM_001076001.2"/>
</dbReference>
<dbReference type="SMR" id="Q0P5D8"/>
<dbReference type="FunCoup" id="Q0P5D8">
    <property type="interactions" value="1557"/>
</dbReference>
<dbReference type="STRING" id="9913.ENSBTAP00000020876"/>
<dbReference type="PaxDb" id="9913-ENSBTAP00000020876"/>
<dbReference type="Ensembl" id="ENSBTAT00000020876.5">
    <property type="protein sequence ID" value="ENSBTAP00000020876.4"/>
    <property type="gene ID" value="ENSBTAG00000015728.5"/>
</dbReference>
<dbReference type="GeneID" id="533791"/>
<dbReference type="KEGG" id="bta:533791"/>
<dbReference type="CTD" id="63899"/>
<dbReference type="VEuPathDB" id="HostDB:ENSBTAG00000015728"/>
<dbReference type="VGNC" id="VGNC:32286">
    <property type="gene designation" value="NSUN3"/>
</dbReference>
<dbReference type="eggNOG" id="KOG2198">
    <property type="taxonomic scope" value="Eukaryota"/>
</dbReference>
<dbReference type="GeneTree" id="ENSGT00940000153665"/>
<dbReference type="HOGENOM" id="CLU_041061_1_0_1"/>
<dbReference type="InParanoid" id="Q0P5D8"/>
<dbReference type="OMA" id="YFHCNEY"/>
<dbReference type="OrthoDB" id="8020218at2759"/>
<dbReference type="TreeFam" id="TF321304"/>
<dbReference type="Proteomes" id="UP000009136">
    <property type="component" value="Chromosome 1"/>
</dbReference>
<dbReference type="Bgee" id="ENSBTAG00000015728">
    <property type="expression patterns" value="Expressed in oocyte and 108 other cell types or tissues"/>
</dbReference>
<dbReference type="GO" id="GO:0005762">
    <property type="term" value="C:mitochondrial large ribosomal subunit"/>
    <property type="evidence" value="ECO:0000318"/>
    <property type="project" value="GO_Central"/>
</dbReference>
<dbReference type="GO" id="GO:0005759">
    <property type="term" value="C:mitochondrial matrix"/>
    <property type="evidence" value="ECO:0000250"/>
    <property type="project" value="UniProtKB"/>
</dbReference>
<dbReference type="GO" id="GO:0005739">
    <property type="term" value="C:mitochondrion"/>
    <property type="evidence" value="ECO:0000250"/>
    <property type="project" value="UniProtKB"/>
</dbReference>
<dbReference type="GO" id="GO:0008168">
    <property type="term" value="F:methyltransferase activity"/>
    <property type="evidence" value="ECO:0000318"/>
    <property type="project" value="GO_Central"/>
</dbReference>
<dbReference type="GO" id="GO:0016428">
    <property type="term" value="F:tRNA (cytidine-5-)-methyltransferase activity"/>
    <property type="evidence" value="ECO:0000250"/>
    <property type="project" value="UniProtKB"/>
</dbReference>
<dbReference type="GO" id="GO:0000049">
    <property type="term" value="F:tRNA binding"/>
    <property type="evidence" value="ECO:0007669"/>
    <property type="project" value="UniProtKB-KW"/>
</dbReference>
<dbReference type="GO" id="GO:0070129">
    <property type="term" value="P:regulation of mitochondrial translation"/>
    <property type="evidence" value="ECO:0000250"/>
    <property type="project" value="UniProtKB"/>
</dbReference>
<dbReference type="GO" id="GO:0031167">
    <property type="term" value="P:rRNA methylation"/>
    <property type="evidence" value="ECO:0000318"/>
    <property type="project" value="GO_Central"/>
</dbReference>
<dbReference type="GO" id="GO:0002127">
    <property type="term" value="P:tRNA wobble base cytosine methylation"/>
    <property type="evidence" value="ECO:0000250"/>
    <property type="project" value="UniProtKB"/>
</dbReference>
<dbReference type="CDD" id="cd02440">
    <property type="entry name" value="AdoMet_MTases"/>
    <property type="match status" value="1"/>
</dbReference>
<dbReference type="FunFam" id="3.40.50.150:FF:000055">
    <property type="entry name" value="5-methylcytosine rRNA methyltransferase NSUN4"/>
    <property type="match status" value="1"/>
</dbReference>
<dbReference type="Gene3D" id="6.20.240.40">
    <property type="match status" value="1"/>
</dbReference>
<dbReference type="Gene3D" id="3.40.50.150">
    <property type="entry name" value="Vaccinia Virus protein VP39"/>
    <property type="match status" value="1"/>
</dbReference>
<dbReference type="InterPro" id="IPR049560">
    <property type="entry name" value="MeTrfase_RsmB-F_NOP2_cat"/>
</dbReference>
<dbReference type="InterPro" id="IPR001678">
    <property type="entry name" value="MeTrfase_RsmB-F_NOP2_dom"/>
</dbReference>
<dbReference type="InterPro" id="IPR023267">
    <property type="entry name" value="RCMT"/>
</dbReference>
<dbReference type="InterPro" id="IPR029063">
    <property type="entry name" value="SAM-dependent_MTases_sf"/>
</dbReference>
<dbReference type="PANTHER" id="PTHR22808">
    <property type="entry name" value="NCL1 YEAST -RELATED NOL1/NOP2/FMU SUN DOMAIN-CONTAINING"/>
    <property type="match status" value="1"/>
</dbReference>
<dbReference type="PANTHER" id="PTHR22808:SF8">
    <property type="entry name" value="TRNA (CYTOSINE(34)-C(5))-METHYLTRANSFERASE, MITOCHONDRIAL"/>
    <property type="match status" value="1"/>
</dbReference>
<dbReference type="Pfam" id="PF01189">
    <property type="entry name" value="Methyltr_RsmB-F"/>
    <property type="match status" value="1"/>
</dbReference>
<dbReference type="PRINTS" id="PR02008">
    <property type="entry name" value="RCMTFAMILY"/>
</dbReference>
<dbReference type="SUPFAM" id="SSF53335">
    <property type="entry name" value="S-adenosyl-L-methionine-dependent methyltransferases"/>
    <property type="match status" value="1"/>
</dbReference>
<dbReference type="PROSITE" id="PS51686">
    <property type="entry name" value="SAM_MT_RSMB_NOP"/>
    <property type="match status" value="1"/>
</dbReference>
<organism>
    <name type="scientific">Bos taurus</name>
    <name type="common">Bovine</name>
    <dbReference type="NCBI Taxonomy" id="9913"/>
    <lineage>
        <taxon>Eukaryota</taxon>
        <taxon>Metazoa</taxon>
        <taxon>Chordata</taxon>
        <taxon>Craniata</taxon>
        <taxon>Vertebrata</taxon>
        <taxon>Euteleostomi</taxon>
        <taxon>Mammalia</taxon>
        <taxon>Eutheria</taxon>
        <taxon>Laurasiatheria</taxon>
        <taxon>Artiodactyla</taxon>
        <taxon>Ruminantia</taxon>
        <taxon>Pecora</taxon>
        <taxon>Bovidae</taxon>
        <taxon>Bovinae</taxon>
        <taxon>Bos</taxon>
    </lineage>
</organism>
<evidence type="ECO:0000250" key="1">
    <source>
        <dbReference type="UniProtKB" id="Q9H649"/>
    </source>
</evidence>
<evidence type="ECO:0000255" key="2">
    <source>
        <dbReference type="PROSITE-ProRule" id="PRU01023"/>
    </source>
</evidence>
<reference key="1">
    <citation type="submission" date="2006-08" db="EMBL/GenBank/DDBJ databases">
        <authorList>
            <consortium name="NIH - Mammalian Gene Collection (MGC) project"/>
        </authorList>
    </citation>
    <scope>NUCLEOTIDE SEQUENCE [LARGE SCALE MRNA]</scope>
    <source>
        <strain>Hereford</strain>
        <tissue>Fetal medulla</tissue>
    </source>
</reference>
<comment type="function">
    <text evidence="1">Mitochondrial tRNA methyltransferase that mediates methylation of cytosine to 5-methylcytosine (m5C) at position 34 of mt-tRNA(Met). mt-tRNA(Met) methylation at cytosine(34) takes place at the wobble position of the anticodon and initiates the formation of 5-formylcytosine (f(5)c) at this position. mt-tRNA(Met) containing the f(5)c modification at the wobble position enables recognition of the AUA codon in addition to the AUG codon, expanding codon recognition in mitochondrial translation.</text>
</comment>
<comment type="catalytic activity">
    <reaction evidence="1">
        <text>cytidine(34) in mitochondrial tRNA + S-adenosyl-L-methionine = 5-methylcytidine(34) in mitochondrial tRNA + S-adenosyl-L-homocysteine + H(+)</text>
        <dbReference type="Rhea" id="RHEA:53076"/>
        <dbReference type="Rhea" id="RHEA-COMP:13451"/>
        <dbReference type="Rhea" id="RHEA-COMP:13453"/>
        <dbReference type="ChEBI" id="CHEBI:15378"/>
        <dbReference type="ChEBI" id="CHEBI:57856"/>
        <dbReference type="ChEBI" id="CHEBI:59789"/>
        <dbReference type="ChEBI" id="CHEBI:74483"/>
        <dbReference type="ChEBI" id="CHEBI:82748"/>
    </reaction>
    <physiologicalReaction direction="left-to-right" evidence="1">
        <dbReference type="Rhea" id="RHEA:53077"/>
    </physiologicalReaction>
</comment>
<comment type="subcellular location">
    <subcellularLocation>
        <location evidence="1">Mitochondrion matrix</location>
    </subcellularLocation>
</comment>
<comment type="similarity">
    <text evidence="2">Belongs to the class I-like SAM-binding methyltransferase superfamily. RsmB/NOP family.</text>
</comment>
<accession>Q0P5D8</accession>
<gene>
    <name evidence="1" type="primary">NSUN3</name>
</gene>
<protein>
    <recommendedName>
        <fullName evidence="1">tRNA (cytosine(34)-C(5))-methyltransferase, mitochondrial</fullName>
        <ecNumber evidence="1">2.1.1.-</ecNumber>
    </recommendedName>
    <alternativeName>
        <fullName evidence="1">NOL1/NOP2/Sun domain family member 3</fullName>
    </alternativeName>
</protein>
<feature type="chain" id="PRO_0000289229" description="tRNA (cytosine(34)-C(5))-methyltransferase, mitochondrial">
    <location>
        <begin position="1"/>
        <end position="338"/>
    </location>
</feature>
<feature type="active site" description="Nucleophile" evidence="2">
    <location>
        <position position="266"/>
    </location>
</feature>
<feature type="binding site" evidence="2">
    <location>
        <begin position="140"/>
        <end position="146"/>
    </location>
    <ligand>
        <name>S-adenosyl-L-methionine</name>
        <dbReference type="ChEBI" id="CHEBI:59789"/>
    </ligand>
</feature>
<feature type="binding site" evidence="2">
    <location>
        <position position="163"/>
    </location>
    <ligand>
        <name>S-adenosyl-L-methionine</name>
        <dbReference type="ChEBI" id="CHEBI:59789"/>
    </ligand>
</feature>
<feature type="binding site" evidence="2">
    <location>
        <position position="194"/>
    </location>
    <ligand>
        <name>S-adenosyl-L-methionine</name>
        <dbReference type="ChEBI" id="CHEBI:59789"/>
    </ligand>
</feature>
<feature type="binding site" evidence="2">
    <location>
        <position position="212"/>
    </location>
    <ligand>
        <name>S-adenosyl-L-methionine</name>
        <dbReference type="ChEBI" id="CHEBI:59789"/>
    </ligand>
</feature>